<name>RIFK_ASPTN</name>
<feature type="chain" id="PRO_0000301837" description="Riboflavin kinase">
    <location>
        <begin position="1"/>
        <end position="205"/>
    </location>
</feature>
<feature type="region of interest" description="Disordered" evidence="3">
    <location>
        <begin position="1"/>
        <end position="24"/>
    </location>
</feature>
<feature type="active site" description="Nucleophile" evidence="1">
    <location>
        <position position="104"/>
    </location>
</feature>
<feature type="binding site" evidence="2">
    <location>
        <position position="44"/>
    </location>
    <ligand>
        <name>Mg(2+)</name>
        <dbReference type="ChEBI" id="CHEBI:18420"/>
    </ligand>
</feature>
<feature type="binding site" evidence="2">
    <location>
        <position position="46"/>
    </location>
    <ligand>
        <name>Mg(2+)</name>
        <dbReference type="ChEBI" id="CHEBI:18420"/>
    </ligand>
</feature>
<organism>
    <name type="scientific">Aspergillus terreus (strain NIH 2624 / FGSC A1156)</name>
    <dbReference type="NCBI Taxonomy" id="341663"/>
    <lineage>
        <taxon>Eukaryota</taxon>
        <taxon>Fungi</taxon>
        <taxon>Dikarya</taxon>
        <taxon>Ascomycota</taxon>
        <taxon>Pezizomycotina</taxon>
        <taxon>Eurotiomycetes</taxon>
        <taxon>Eurotiomycetidae</taxon>
        <taxon>Eurotiales</taxon>
        <taxon>Aspergillaceae</taxon>
        <taxon>Aspergillus</taxon>
        <taxon>Aspergillus subgen. Circumdati</taxon>
    </lineage>
</organism>
<dbReference type="EC" id="2.7.1.26"/>
<dbReference type="EMBL" id="CH476602">
    <property type="protein sequence ID" value="EAU33317.1"/>
    <property type="molecule type" value="Genomic_DNA"/>
</dbReference>
<dbReference type="RefSeq" id="XP_001215951.1">
    <property type="nucleotide sequence ID" value="XM_001215951.1"/>
</dbReference>
<dbReference type="SMR" id="Q0CHR1"/>
<dbReference type="STRING" id="341663.Q0CHR1"/>
<dbReference type="EnsemblFungi" id="EAU33317">
    <property type="protein sequence ID" value="EAU33317"/>
    <property type="gene ID" value="ATEG_06773"/>
</dbReference>
<dbReference type="GeneID" id="4321940"/>
<dbReference type="VEuPathDB" id="FungiDB:ATEG_06773"/>
<dbReference type="eggNOG" id="KOG3110">
    <property type="taxonomic scope" value="Eukaryota"/>
</dbReference>
<dbReference type="HOGENOM" id="CLU_048437_3_2_1"/>
<dbReference type="OMA" id="FDCEVAR"/>
<dbReference type="OrthoDB" id="276388at2759"/>
<dbReference type="UniPathway" id="UPA00276">
    <property type="reaction ID" value="UER00406"/>
</dbReference>
<dbReference type="Proteomes" id="UP000007963">
    <property type="component" value="Unassembled WGS sequence"/>
</dbReference>
<dbReference type="GO" id="GO:0005739">
    <property type="term" value="C:mitochondrion"/>
    <property type="evidence" value="ECO:0007669"/>
    <property type="project" value="TreeGrafter"/>
</dbReference>
<dbReference type="GO" id="GO:0005524">
    <property type="term" value="F:ATP binding"/>
    <property type="evidence" value="ECO:0007669"/>
    <property type="project" value="UniProtKB-KW"/>
</dbReference>
<dbReference type="GO" id="GO:0046872">
    <property type="term" value="F:metal ion binding"/>
    <property type="evidence" value="ECO:0007669"/>
    <property type="project" value="UniProtKB-KW"/>
</dbReference>
<dbReference type="GO" id="GO:0008531">
    <property type="term" value="F:riboflavin kinase activity"/>
    <property type="evidence" value="ECO:0007669"/>
    <property type="project" value="UniProtKB-EC"/>
</dbReference>
<dbReference type="GO" id="GO:0009398">
    <property type="term" value="P:FMN biosynthetic process"/>
    <property type="evidence" value="ECO:0007669"/>
    <property type="project" value="UniProtKB-UniPathway"/>
</dbReference>
<dbReference type="GO" id="GO:0009231">
    <property type="term" value="P:riboflavin biosynthetic process"/>
    <property type="evidence" value="ECO:0007669"/>
    <property type="project" value="InterPro"/>
</dbReference>
<dbReference type="FunFam" id="2.40.30.30:FF:000008">
    <property type="entry name" value="Riboflavin kinase"/>
    <property type="match status" value="1"/>
</dbReference>
<dbReference type="Gene3D" id="2.40.30.30">
    <property type="entry name" value="Riboflavin kinase-like"/>
    <property type="match status" value="1"/>
</dbReference>
<dbReference type="InterPro" id="IPR023468">
    <property type="entry name" value="Riboflavin_kinase"/>
</dbReference>
<dbReference type="InterPro" id="IPR015865">
    <property type="entry name" value="Riboflavin_kinase_bac/euk"/>
</dbReference>
<dbReference type="InterPro" id="IPR023465">
    <property type="entry name" value="Riboflavin_kinase_dom_sf"/>
</dbReference>
<dbReference type="PANTHER" id="PTHR22749:SF6">
    <property type="entry name" value="RIBOFLAVIN KINASE"/>
    <property type="match status" value="1"/>
</dbReference>
<dbReference type="PANTHER" id="PTHR22749">
    <property type="entry name" value="RIBOFLAVIN KINASE/FMN ADENYLYLTRANSFERASE"/>
    <property type="match status" value="1"/>
</dbReference>
<dbReference type="Pfam" id="PF01687">
    <property type="entry name" value="Flavokinase"/>
    <property type="match status" value="1"/>
</dbReference>
<dbReference type="SMART" id="SM00904">
    <property type="entry name" value="Flavokinase"/>
    <property type="match status" value="1"/>
</dbReference>
<dbReference type="SUPFAM" id="SSF82114">
    <property type="entry name" value="Riboflavin kinase-like"/>
    <property type="match status" value="1"/>
</dbReference>
<protein>
    <recommendedName>
        <fullName>Riboflavin kinase</fullName>
        <ecNumber>2.7.1.26</ecNumber>
    </recommendedName>
    <alternativeName>
        <fullName>Flavin mononucleotide kinase 1</fullName>
    </alternativeName>
</protein>
<comment type="function">
    <text evidence="1">Catalyzes the phosphorylation of riboflavin (vitamin B2) to form flavin mononucleotide (FMN) coenzyme.</text>
</comment>
<comment type="catalytic activity">
    <reaction>
        <text>riboflavin + ATP = FMN + ADP + H(+)</text>
        <dbReference type="Rhea" id="RHEA:14357"/>
        <dbReference type="ChEBI" id="CHEBI:15378"/>
        <dbReference type="ChEBI" id="CHEBI:30616"/>
        <dbReference type="ChEBI" id="CHEBI:57986"/>
        <dbReference type="ChEBI" id="CHEBI:58210"/>
        <dbReference type="ChEBI" id="CHEBI:456216"/>
        <dbReference type="EC" id="2.7.1.26"/>
    </reaction>
</comment>
<comment type="cofactor">
    <cofactor evidence="1">
        <name>Zn(2+)</name>
        <dbReference type="ChEBI" id="CHEBI:29105"/>
    </cofactor>
    <cofactor evidence="1">
        <name>Mg(2+)</name>
        <dbReference type="ChEBI" id="CHEBI:18420"/>
    </cofactor>
    <text evidence="1">Zinc or magnesium.</text>
</comment>
<comment type="pathway">
    <text>Cofactor biosynthesis; FMN biosynthesis; FMN from riboflavin (ATP route): step 1/1.</text>
</comment>
<comment type="similarity">
    <text evidence="4">Belongs to the flavokinase family.</text>
</comment>
<accession>Q0CHR1</accession>
<gene>
    <name type="primary">fmn1</name>
    <name type="ORF">ATEG_06773</name>
</gene>
<keyword id="KW-0067">ATP-binding</keyword>
<keyword id="KW-0285">Flavoprotein</keyword>
<keyword id="KW-0288">FMN</keyword>
<keyword id="KW-0418">Kinase</keyword>
<keyword id="KW-0460">Magnesium</keyword>
<keyword id="KW-0479">Metal-binding</keyword>
<keyword id="KW-0547">Nucleotide-binding</keyword>
<keyword id="KW-1185">Reference proteome</keyword>
<keyword id="KW-0808">Transferase</keyword>
<keyword id="KW-0862">Zinc</keyword>
<evidence type="ECO:0000250" key="1"/>
<evidence type="ECO:0000250" key="2">
    <source>
        <dbReference type="UniProtKB" id="Q969G6"/>
    </source>
</evidence>
<evidence type="ECO:0000256" key="3">
    <source>
        <dbReference type="SAM" id="MobiDB-lite"/>
    </source>
</evidence>
<evidence type="ECO:0000305" key="4"/>
<reference key="1">
    <citation type="submission" date="2005-09" db="EMBL/GenBank/DDBJ databases">
        <title>Annotation of the Aspergillus terreus NIH2624 genome.</title>
        <authorList>
            <person name="Birren B.W."/>
            <person name="Lander E.S."/>
            <person name="Galagan J.E."/>
            <person name="Nusbaum C."/>
            <person name="Devon K."/>
            <person name="Henn M."/>
            <person name="Ma L.-J."/>
            <person name="Jaffe D.B."/>
            <person name="Butler J."/>
            <person name="Alvarez P."/>
            <person name="Gnerre S."/>
            <person name="Grabherr M."/>
            <person name="Kleber M."/>
            <person name="Mauceli E.W."/>
            <person name="Brockman W."/>
            <person name="Rounsley S."/>
            <person name="Young S.K."/>
            <person name="LaButti K."/>
            <person name="Pushparaj V."/>
            <person name="DeCaprio D."/>
            <person name="Crawford M."/>
            <person name="Koehrsen M."/>
            <person name="Engels R."/>
            <person name="Montgomery P."/>
            <person name="Pearson M."/>
            <person name="Howarth C."/>
            <person name="Larson L."/>
            <person name="Luoma S."/>
            <person name="White J."/>
            <person name="Alvarado L."/>
            <person name="Kodira C.D."/>
            <person name="Zeng Q."/>
            <person name="Oleary S."/>
            <person name="Yandava C."/>
            <person name="Denning D.W."/>
            <person name="Nierman W.C."/>
            <person name="Milne T."/>
            <person name="Madden K."/>
        </authorList>
    </citation>
    <scope>NUCLEOTIDE SEQUENCE [LARGE SCALE GENOMIC DNA]</scope>
    <source>
        <strain>NIH 2624 / FGSC A1156</strain>
    </source>
</reference>
<sequence length="205" mass="22385">MRPDTSRDPVAGPDSGPEPPFPIRLAGPVIKGFGRGSKELGIPTANIPADGLAEYPDLQVGVYYGVVALNPAQSEVPSTSAQILPAVLSIGYNPFYKNTTRSIEIHIMPPLTAPSPTATGTPGHVTFHKLPDFYGTSLKLLILGYIRPEYDYVSAEALIEDIRVDCEVARRSLQRGAYVRYLGAGADENEENEEVQEQRRWLTTF</sequence>
<proteinExistence type="inferred from homology"/>